<accession>B1LMS0</accession>
<comment type="subcellular location">
    <subcellularLocation>
        <location evidence="1">Cell inner membrane</location>
        <topology evidence="1">Multi-pass membrane protein</topology>
    </subcellularLocation>
</comment>
<comment type="similarity">
    <text evidence="1">Belongs to the UPF0761 family.</text>
</comment>
<sequence>MLKTIQDKARHRTRPLWAWLKLLWQRIDEDNMTTLAGNLAYVSLLSLVPLVAVVFALFAAFPMFSDVSIQLRHFIFANFLPATGDVIQRYIEQFVANSNKMTAVGACGLIVTALLLMYSIDSALNTIWRSKRARPKIYSFAVYWMILTLGPLLAGASLAISSYLLSLRWASDLNTVIDNVLRIFPLLLSWISFWLLYSIVPTIRVPNRDAIVGAFVAALLFEAGKKGFALYITMFPSYQLIYGVLAVIPILFVWVYWTWCIVLLGAEITVTLGEYRKLKQAAEQEEDDEP</sequence>
<dbReference type="EMBL" id="CP000970">
    <property type="protein sequence ID" value="ACB18546.1"/>
    <property type="molecule type" value="Genomic_DNA"/>
</dbReference>
<dbReference type="RefSeq" id="WP_000920762.1">
    <property type="nucleotide sequence ID" value="NC_010498.1"/>
</dbReference>
<dbReference type="KEGG" id="ecm:EcSMS35_4271"/>
<dbReference type="HOGENOM" id="CLU_032288_0_0_6"/>
<dbReference type="Proteomes" id="UP000007011">
    <property type="component" value="Chromosome"/>
</dbReference>
<dbReference type="GO" id="GO:0005886">
    <property type="term" value="C:plasma membrane"/>
    <property type="evidence" value="ECO:0007669"/>
    <property type="project" value="UniProtKB-SubCell"/>
</dbReference>
<dbReference type="HAMAP" id="MF_00672">
    <property type="entry name" value="UPF0761"/>
    <property type="match status" value="1"/>
</dbReference>
<dbReference type="InterPro" id="IPR023679">
    <property type="entry name" value="UPF0761_bac"/>
</dbReference>
<dbReference type="InterPro" id="IPR017039">
    <property type="entry name" value="Virul_fac_BrkB"/>
</dbReference>
<dbReference type="NCBIfam" id="NF002457">
    <property type="entry name" value="PRK01637.1"/>
    <property type="match status" value="1"/>
</dbReference>
<dbReference type="NCBIfam" id="TIGR00765">
    <property type="entry name" value="yihY_not_rbn"/>
    <property type="match status" value="1"/>
</dbReference>
<dbReference type="PANTHER" id="PTHR30213">
    <property type="entry name" value="INNER MEMBRANE PROTEIN YHJD"/>
    <property type="match status" value="1"/>
</dbReference>
<dbReference type="PANTHER" id="PTHR30213:SF0">
    <property type="entry name" value="UPF0761 MEMBRANE PROTEIN YIHY"/>
    <property type="match status" value="1"/>
</dbReference>
<dbReference type="Pfam" id="PF03631">
    <property type="entry name" value="Virul_fac_BrkB"/>
    <property type="match status" value="1"/>
</dbReference>
<dbReference type="PIRSF" id="PIRSF035875">
    <property type="entry name" value="RNase_BN"/>
    <property type="match status" value="1"/>
</dbReference>
<organism>
    <name type="scientific">Escherichia coli (strain SMS-3-5 / SECEC)</name>
    <dbReference type="NCBI Taxonomy" id="439855"/>
    <lineage>
        <taxon>Bacteria</taxon>
        <taxon>Pseudomonadati</taxon>
        <taxon>Pseudomonadota</taxon>
        <taxon>Gammaproteobacteria</taxon>
        <taxon>Enterobacterales</taxon>
        <taxon>Enterobacteriaceae</taxon>
        <taxon>Escherichia</taxon>
    </lineage>
</organism>
<protein>
    <recommendedName>
        <fullName evidence="1">UPF0761 membrane protein YihY</fullName>
    </recommendedName>
</protein>
<feature type="chain" id="PRO_1000131553" description="UPF0761 membrane protein YihY">
    <location>
        <begin position="1"/>
        <end position="290"/>
    </location>
</feature>
<feature type="transmembrane region" description="Helical" evidence="1">
    <location>
        <begin position="44"/>
        <end position="64"/>
    </location>
</feature>
<feature type="transmembrane region" description="Helical" evidence="1">
    <location>
        <begin position="104"/>
        <end position="124"/>
    </location>
</feature>
<feature type="transmembrane region" description="Helical" evidence="1">
    <location>
        <begin position="140"/>
        <end position="160"/>
    </location>
</feature>
<feature type="transmembrane region" description="Helical" evidence="1">
    <location>
        <begin position="183"/>
        <end position="203"/>
    </location>
</feature>
<feature type="transmembrane region" description="Helical" evidence="1">
    <location>
        <begin position="210"/>
        <end position="230"/>
    </location>
</feature>
<feature type="transmembrane region" description="Helical" evidence="1">
    <location>
        <begin position="244"/>
        <end position="264"/>
    </location>
</feature>
<proteinExistence type="inferred from homology"/>
<name>YIHY_ECOSM</name>
<reference key="1">
    <citation type="journal article" date="2008" name="J. Bacteriol.">
        <title>Insights into the environmental resistance gene pool from the genome sequence of the multidrug-resistant environmental isolate Escherichia coli SMS-3-5.</title>
        <authorList>
            <person name="Fricke W.F."/>
            <person name="Wright M.S."/>
            <person name="Lindell A.H."/>
            <person name="Harkins D.M."/>
            <person name="Baker-Austin C."/>
            <person name="Ravel J."/>
            <person name="Stepanauskas R."/>
        </authorList>
    </citation>
    <scope>NUCLEOTIDE SEQUENCE [LARGE SCALE GENOMIC DNA]</scope>
    <source>
        <strain>SMS-3-5 / SECEC</strain>
    </source>
</reference>
<gene>
    <name evidence="1" type="primary">yihY</name>
    <name type="ordered locus">EcSMS35_4271</name>
</gene>
<keyword id="KW-0997">Cell inner membrane</keyword>
<keyword id="KW-1003">Cell membrane</keyword>
<keyword id="KW-0472">Membrane</keyword>
<keyword id="KW-0812">Transmembrane</keyword>
<keyword id="KW-1133">Transmembrane helix</keyword>
<evidence type="ECO:0000255" key="1">
    <source>
        <dbReference type="HAMAP-Rule" id="MF_00672"/>
    </source>
</evidence>